<evidence type="ECO:0000255" key="1">
    <source>
        <dbReference type="HAMAP-Rule" id="MF_01849"/>
    </source>
</evidence>
<evidence type="ECO:0000255" key="2">
    <source>
        <dbReference type="PROSITE-ProRule" id="PRU01266"/>
    </source>
</evidence>
<keyword id="KW-0004">4Fe-4S</keyword>
<keyword id="KW-0963">Cytoplasm</keyword>
<keyword id="KW-1015">Disulfide bond</keyword>
<keyword id="KW-0408">Iron</keyword>
<keyword id="KW-0411">Iron-sulfur</keyword>
<keyword id="KW-0479">Metal-binding</keyword>
<keyword id="KW-0489">Methyltransferase</keyword>
<keyword id="KW-0698">rRNA processing</keyword>
<keyword id="KW-0949">S-adenosyl-L-methionine</keyword>
<keyword id="KW-0808">Transferase</keyword>
<keyword id="KW-0819">tRNA processing</keyword>
<dbReference type="EC" id="2.1.1.192" evidence="1"/>
<dbReference type="EMBL" id="CP001186">
    <property type="protein sequence ID" value="ACK96188.1"/>
    <property type="molecule type" value="Genomic_DNA"/>
</dbReference>
<dbReference type="RefSeq" id="WP_000450548.1">
    <property type="nucleotide sequence ID" value="NC_011772.1"/>
</dbReference>
<dbReference type="SMR" id="B7IUM3"/>
<dbReference type="KEGG" id="bcg:BCG9842_B1280"/>
<dbReference type="HOGENOM" id="CLU_029101_0_1_9"/>
<dbReference type="Proteomes" id="UP000006744">
    <property type="component" value="Chromosome"/>
</dbReference>
<dbReference type="GO" id="GO:0005737">
    <property type="term" value="C:cytoplasm"/>
    <property type="evidence" value="ECO:0007669"/>
    <property type="project" value="UniProtKB-SubCell"/>
</dbReference>
<dbReference type="GO" id="GO:0051539">
    <property type="term" value="F:4 iron, 4 sulfur cluster binding"/>
    <property type="evidence" value="ECO:0007669"/>
    <property type="project" value="UniProtKB-UniRule"/>
</dbReference>
<dbReference type="GO" id="GO:0046872">
    <property type="term" value="F:metal ion binding"/>
    <property type="evidence" value="ECO:0007669"/>
    <property type="project" value="UniProtKB-KW"/>
</dbReference>
<dbReference type="GO" id="GO:0070040">
    <property type="term" value="F:rRNA (adenine(2503)-C2-)-methyltransferase activity"/>
    <property type="evidence" value="ECO:0007669"/>
    <property type="project" value="UniProtKB-UniRule"/>
</dbReference>
<dbReference type="GO" id="GO:0019843">
    <property type="term" value="F:rRNA binding"/>
    <property type="evidence" value="ECO:0007669"/>
    <property type="project" value="UniProtKB-UniRule"/>
</dbReference>
<dbReference type="GO" id="GO:0002935">
    <property type="term" value="F:tRNA (adenine(37)-C2)-methyltransferase activity"/>
    <property type="evidence" value="ECO:0007669"/>
    <property type="project" value="UniProtKB-UniRule"/>
</dbReference>
<dbReference type="GO" id="GO:0000049">
    <property type="term" value="F:tRNA binding"/>
    <property type="evidence" value="ECO:0007669"/>
    <property type="project" value="UniProtKB-UniRule"/>
</dbReference>
<dbReference type="GO" id="GO:0070475">
    <property type="term" value="P:rRNA base methylation"/>
    <property type="evidence" value="ECO:0007669"/>
    <property type="project" value="UniProtKB-UniRule"/>
</dbReference>
<dbReference type="GO" id="GO:0030488">
    <property type="term" value="P:tRNA methylation"/>
    <property type="evidence" value="ECO:0007669"/>
    <property type="project" value="UniProtKB-UniRule"/>
</dbReference>
<dbReference type="CDD" id="cd01335">
    <property type="entry name" value="Radical_SAM"/>
    <property type="match status" value="1"/>
</dbReference>
<dbReference type="FunFam" id="1.10.150.530:FF:000002">
    <property type="entry name" value="Probable dual-specificity RNA methyltransferase RlmN"/>
    <property type="match status" value="1"/>
</dbReference>
<dbReference type="FunFam" id="3.20.20.70:FF:000014">
    <property type="entry name" value="Probable dual-specificity RNA methyltransferase RlmN"/>
    <property type="match status" value="1"/>
</dbReference>
<dbReference type="Gene3D" id="1.10.150.530">
    <property type="match status" value="1"/>
</dbReference>
<dbReference type="Gene3D" id="3.20.20.70">
    <property type="entry name" value="Aldolase class I"/>
    <property type="match status" value="1"/>
</dbReference>
<dbReference type="HAMAP" id="MF_01849">
    <property type="entry name" value="RNA_methyltr_RlmN"/>
    <property type="match status" value="1"/>
</dbReference>
<dbReference type="InterPro" id="IPR013785">
    <property type="entry name" value="Aldolase_TIM"/>
</dbReference>
<dbReference type="InterPro" id="IPR040072">
    <property type="entry name" value="Methyltransferase_A"/>
</dbReference>
<dbReference type="InterPro" id="IPR048641">
    <property type="entry name" value="RlmN_N"/>
</dbReference>
<dbReference type="InterPro" id="IPR027492">
    <property type="entry name" value="RNA_MTrfase_RlmN"/>
</dbReference>
<dbReference type="InterPro" id="IPR004383">
    <property type="entry name" value="rRNA_lsu_MTrfase_RlmN/Cfr"/>
</dbReference>
<dbReference type="InterPro" id="IPR007197">
    <property type="entry name" value="rSAM"/>
</dbReference>
<dbReference type="NCBIfam" id="TIGR00048">
    <property type="entry name" value="rRNA_mod_RlmN"/>
    <property type="match status" value="1"/>
</dbReference>
<dbReference type="PANTHER" id="PTHR30544">
    <property type="entry name" value="23S RRNA METHYLTRANSFERASE"/>
    <property type="match status" value="1"/>
</dbReference>
<dbReference type="PANTHER" id="PTHR30544:SF5">
    <property type="entry name" value="RADICAL SAM CORE DOMAIN-CONTAINING PROTEIN"/>
    <property type="match status" value="1"/>
</dbReference>
<dbReference type="Pfam" id="PF04055">
    <property type="entry name" value="Radical_SAM"/>
    <property type="match status" value="1"/>
</dbReference>
<dbReference type="Pfam" id="PF21016">
    <property type="entry name" value="RlmN_N"/>
    <property type="match status" value="1"/>
</dbReference>
<dbReference type="PIRSF" id="PIRSF006004">
    <property type="entry name" value="CHP00048"/>
    <property type="match status" value="1"/>
</dbReference>
<dbReference type="SFLD" id="SFLDF00275">
    <property type="entry name" value="adenosine_C2_methyltransferase"/>
    <property type="match status" value="1"/>
</dbReference>
<dbReference type="SFLD" id="SFLDG01062">
    <property type="entry name" value="methyltransferase_(Class_A)"/>
    <property type="match status" value="1"/>
</dbReference>
<dbReference type="SUPFAM" id="SSF102114">
    <property type="entry name" value="Radical SAM enzymes"/>
    <property type="match status" value="1"/>
</dbReference>
<dbReference type="PROSITE" id="PS51918">
    <property type="entry name" value="RADICAL_SAM"/>
    <property type="match status" value="1"/>
</dbReference>
<comment type="function">
    <text evidence="1">Specifically methylates position 2 of adenine 2503 in 23S rRNA and position 2 of adenine 37 in tRNAs.</text>
</comment>
<comment type="catalytic activity">
    <reaction evidence="1">
        <text>adenosine(2503) in 23S rRNA + 2 reduced [2Fe-2S]-[ferredoxin] + 2 S-adenosyl-L-methionine = 2-methyladenosine(2503) in 23S rRNA + 5'-deoxyadenosine + L-methionine + 2 oxidized [2Fe-2S]-[ferredoxin] + S-adenosyl-L-homocysteine</text>
        <dbReference type="Rhea" id="RHEA:42916"/>
        <dbReference type="Rhea" id="RHEA-COMP:10000"/>
        <dbReference type="Rhea" id="RHEA-COMP:10001"/>
        <dbReference type="Rhea" id="RHEA-COMP:10152"/>
        <dbReference type="Rhea" id="RHEA-COMP:10282"/>
        <dbReference type="ChEBI" id="CHEBI:17319"/>
        <dbReference type="ChEBI" id="CHEBI:33737"/>
        <dbReference type="ChEBI" id="CHEBI:33738"/>
        <dbReference type="ChEBI" id="CHEBI:57844"/>
        <dbReference type="ChEBI" id="CHEBI:57856"/>
        <dbReference type="ChEBI" id="CHEBI:59789"/>
        <dbReference type="ChEBI" id="CHEBI:74411"/>
        <dbReference type="ChEBI" id="CHEBI:74497"/>
        <dbReference type="EC" id="2.1.1.192"/>
    </reaction>
</comment>
<comment type="catalytic activity">
    <reaction evidence="1">
        <text>adenosine(37) in tRNA + 2 reduced [2Fe-2S]-[ferredoxin] + 2 S-adenosyl-L-methionine = 2-methyladenosine(37) in tRNA + 5'-deoxyadenosine + L-methionine + 2 oxidized [2Fe-2S]-[ferredoxin] + S-adenosyl-L-homocysteine</text>
        <dbReference type="Rhea" id="RHEA:43332"/>
        <dbReference type="Rhea" id="RHEA-COMP:10000"/>
        <dbReference type="Rhea" id="RHEA-COMP:10001"/>
        <dbReference type="Rhea" id="RHEA-COMP:10162"/>
        <dbReference type="Rhea" id="RHEA-COMP:10485"/>
        <dbReference type="ChEBI" id="CHEBI:17319"/>
        <dbReference type="ChEBI" id="CHEBI:33737"/>
        <dbReference type="ChEBI" id="CHEBI:33738"/>
        <dbReference type="ChEBI" id="CHEBI:57844"/>
        <dbReference type="ChEBI" id="CHEBI:57856"/>
        <dbReference type="ChEBI" id="CHEBI:59789"/>
        <dbReference type="ChEBI" id="CHEBI:74411"/>
        <dbReference type="ChEBI" id="CHEBI:74497"/>
        <dbReference type="EC" id="2.1.1.192"/>
    </reaction>
</comment>
<comment type="cofactor">
    <cofactor evidence="1">
        <name>[4Fe-4S] cluster</name>
        <dbReference type="ChEBI" id="CHEBI:49883"/>
    </cofactor>
    <text evidence="1">Binds 1 [4Fe-4S] cluster. The cluster is coordinated with 3 cysteines and an exchangeable S-adenosyl-L-methionine.</text>
</comment>
<comment type="subcellular location">
    <subcellularLocation>
        <location evidence="1">Cytoplasm</location>
    </subcellularLocation>
</comment>
<comment type="miscellaneous">
    <text evidence="1">Reaction proceeds by a ping-pong mechanism involving intermediate methylation of a conserved cysteine residue.</text>
</comment>
<comment type="similarity">
    <text evidence="1">Belongs to the radical SAM superfamily. RlmN family.</text>
</comment>
<gene>
    <name evidence="1" type="primary">rlmN</name>
    <name type="ordered locus">BCG9842_B1280</name>
</gene>
<sequence>METTVRKQKKNVETKKPSIYSLQIHEMQDWLKEQGEPKFRAGQIFDWLYKKRVKNYEDMSNLSKGLRDKLSNSFDITTLNTLVKQTSSDGTIKFLFQLYDGYSIETVLMRHEYGNSICVTTQVGCRIGCTFCASTLGGLKRNLEAGEIVAQVVEVQRALDETEERVSSLVVMGIGEPFDNYDNLMGFLRITNHEKGLHIGARHMTVSTSGIIPKIYKFAEEELQINFAISLHAPNSELRSKLMPINRAYKLPDLMEAIKYYVNRTGRRITFEYGLFGGENDQVEHAEELAALLKGVKCHVNLIPVNYVPERDYVRTPREQIFLFEKTLKDRGVNVTIRREQGHDIDAACGQLRAKERKEETR</sequence>
<name>RLMN_BACC2</name>
<reference key="1">
    <citation type="submission" date="2008-10" db="EMBL/GenBank/DDBJ databases">
        <title>Genome sequence of Bacillus cereus G9842.</title>
        <authorList>
            <person name="Dodson R.J."/>
            <person name="Durkin A.S."/>
            <person name="Rosovitz M.J."/>
            <person name="Rasko D.A."/>
            <person name="Hoffmaster A."/>
            <person name="Ravel J."/>
            <person name="Sutton G."/>
        </authorList>
    </citation>
    <scope>NUCLEOTIDE SEQUENCE [LARGE SCALE GENOMIC DNA]</scope>
    <source>
        <strain>G9842</strain>
    </source>
</reference>
<accession>B7IUM3</accession>
<organism>
    <name type="scientific">Bacillus cereus (strain G9842)</name>
    <dbReference type="NCBI Taxonomy" id="405531"/>
    <lineage>
        <taxon>Bacteria</taxon>
        <taxon>Bacillati</taxon>
        <taxon>Bacillota</taxon>
        <taxon>Bacilli</taxon>
        <taxon>Bacillales</taxon>
        <taxon>Bacillaceae</taxon>
        <taxon>Bacillus</taxon>
        <taxon>Bacillus cereus group</taxon>
    </lineage>
</organism>
<proteinExistence type="inferred from homology"/>
<protein>
    <recommendedName>
        <fullName evidence="1">Probable dual-specificity RNA methyltransferase RlmN</fullName>
        <ecNumber evidence="1">2.1.1.192</ecNumber>
    </recommendedName>
    <alternativeName>
        <fullName evidence="1">23S rRNA (adenine(2503)-C(2))-methyltransferase</fullName>
    </alternativeName>
    <alternativeName>
        <fullName evidence="1">23S rRNA m2A2503 methyltransferase</fullName>
    </alternativeName>
    <alternativeName>
        <fullName evidence="1">Ribosomal RNA large subunit methyltransferase N</fullName>
    </alternativeName>
    <alternativeName>
        <fullName evidence="1">tRNA (adenine(37)-C(2))-methyltransferase</fullName>
    </alternativeName>
    <alternativeName>
        <fullName evidence="1">tRNA m2A37 methyltransferase</fullName>
    </alternativeName>
</protein>
<feature type="chain" id="PRO_1000188548" description="Probable dual-specificity RNA methyltransferase RlmN">
    <location>
        <begin position="1"/>
        <end position="362"/>
    </location>
</feature>
<feature type="domain" description="Radical SAM core" evidence="2">
    <location>
        <begin position="111"/>
        <end position="344"/>
    </location>
</feature>
<feature type="active site" description="Proton acceptor" evidence="1">
    <location>
        <position position="105"/>
    </location>
</feature>
<feature type="active site" description="S-methylcysteine intermediate" evidence="1">
    <location>
        <position position="349"/>
    </location>
</feature>
<feature type="binding site" evidence="1">
    <location>
        <position position="125"/>
    </location>
    <ligand>
        <name>[4Fe-4S] cluster</name>
        <dbReference type="ChEBI" id="CHEBI:49883"/>
        <note>4Fe-4S-S-AdoMet</note>
    </ligand>
</feature>
<feature type="binding site" evidence="1">
    <location>
        <position position="129"/>
    </location>
    <ligand>
        <name>[4Fe-4S] cluster</name>
        <dbReference type="ChEBI" id="CHEBI:49883"/>
        <note>4Fe-4S-S-AdoMet</note>
    </ligand>
</feature>
<feature type="binding site" evidence="1">
    <location>
        <position position="132"/>
    </location>
    <ligand>
        <name>[4Fe-4S] cluster</name>
        <dbReference type="ChEBI" id="CHEBI:49883"/>
        <note>4Fe-4S-S-AdoMet</note>
    </ligand>
</feature>
<feature type="binding site" evidence="1">
    <location>
        <begin position="175"/>
        <end position="176"/>
    </location>
    <ligand>
        <name>S-adenosyl-L-methionine</name>
        <dbReference type="ChEBI" id="CHEBI:59789"/>
    </ligand>
</feature>
<feature type="binding site" evidence="1">
    <location>
        <position position="207"/>
    </location>
    <ligand>
        <name>S-adenosyl-L-methionine</name>
        <dbReference type="ChEBI" id="CHEBI:59789"/>
    </ligand>
</feature>
<feature type="binding site" evidence="1">
    <location>
        <begin position="230"/>
        <end position="232"/>
    </location>
    <ligand>
        <name>S-adenosyl-L-methionine</name>
        <dbReference type="ChEBI" id="CHEBI:59789"/>
    </ligand>
</feature>
<feature type="binding site" evidence="1">
    <location>
        <position position="306"/>
    </location>
    <ligand>
        <name>S-adenosyl-L-methionine</name>
        <dbReference type="ChEBI" id="CHEBI:59789"/>
    </ligand>
</feature>
<feature type="disulfide bond" description="(transient)" evidence="1">
    <location>
        <begin position="118"/>
        <end position="349"/>
    </location>
</feature>